<comment type="function">
    <text evidence="1">Catalyzes a trans-dehydration via an enolate intermediate.</text>
</comment>
<comment type="catalytic activity">
    <reaction evidence="1">
        <text>3-dehydroquinate = 3-dehydroshikimate + H2O</text>
        <dbReference type="Rhea" id="RHEA:21096"/>
        <dbReference type="ChEBI" id="CHEBI:15377"/>
        <dbReference type="ChEBI" id="CHEBI:16630"/>
        <dbReference type="ChEBI" id="CHEBI:32364"/>
        <dbReference type="EC" id="4.2.1.10"/>
    </reaction>
</comment>
<comment type="pathway">
    <text evidence="1">Metabolic intermediate biosynthesis; chorismate biosynthesis; chorismate from D-erythrose 4-phosphate and phosphoenolpyruvate: step 3/7.</text>
</comment>
<comment type="subunit">
    <text evidence="1">Homododecamer.</text>
</comment>
<comment type="similarity">
    <text evidence="1">Belongs to the type-II 3-dehydroquinase family.</text>
</comment>
<reference key="1">
    <citation type="submission" date="2009-02" db="EMBL/GenBank/DDBJ databases">
        <title>Genome sequence of Bacillus cereus 03BB102.</title>
        <authorList>
            <person name="Dodson R.J."/>
            <person name="Jackson P."/>
            <person name="Munk A.C."/>
            <person name="Brettin T."/>
            <person name="Bruce D."/>
            <person name="Detter C."/>
            <person name="Tapia R."/>
            <person name="Han C."/>
            <person name="Sutton G."/>
            <person name="Sims D."/>
        </authorList>
    </citation>
    <scope>NUCLEOTIDE SEQUENCE [LARGE SCALE GENOMIC DNA]</scope>
    <source>
        <strain>03BB102</strain>
    </source>
</reference>
<feature type="chain" id="PRO_1000123681" description="3-dehydroquinate dehydratase">
    <location>
        <begin position="1"/>
        <end position="146"/>
    </location>
</feature>
<feature type="active site" description="Proton acceptor" evidence="1">
    <location>
        <position position="23"/>
    </location>
</feature>
<feature type="active site" description="Proton donor" evidence="1">
    <location>
        <position position="100"/>
    </location>
</feature>
<feature type="binding site" evidence="1">
    <location>
        <position position="74"/>
    </location>
    <ligand>
        <name>substrate</name>
    </ligand>
</feature>
<feature type="binding site" evidence="1">
    <location>
        <position position="80"/>
    </location>
    <ligand>
        <name>substrate</name>
    </ligand>
</feature>
<feature type="binding site" evidence="1">
    <location>
        <position position="87"/>
    </location>
    <ligand>
        <name>substrate</name>
    </ligand>
</feature>
<feature type="binding site" evidence="1">
    <location>
        <begin position="101"/>
        <end position="102"/>
    </location>
    <ligand>
        <name>substrate</name>
    </ligand>
</feature>
<feature type="binding site" evidence="1">
    <location>
        <position position="111"/>
    </location>
    <ligand>
        <name>substrate</name>
    </ligand>
</feature>
<feature type="site" description="Transition state stabilizer" evidence="1">
    <location>
        <position position="18"/>
    </location>
</feature>
<evidence type="ECO:0000255" key="1">
    <source>
        <dbReference type="HAMAP-Rule" id="MF_00169"/>
    </source>
</evidence>
<organism>
    <name type="scientific">Bacillus cereus (strain 03BB102)</name>
    <dbReference type="NCBI Taxonomy" id="572264"/>
    <lineage>
        <taxon>Bacteria</taxon>
        <taxon>Bacillati</taxon>
        <taxon>Bacillota</taxon>
        <taxon>Bacilli</taxon>
        <taxon>Bacillales</taxon>
        <taxon>Bacillaceae</taxon>
        <taxon>Bacillus</taxon>
        <taxon>Bacillus cereus group</taxon>
    </lineage>
</organism>
<name>AROQ_BACC3</name>
<proteinExistence type="inferred from homology"/>
<protein>
    <recommendedName>
        <fullName evidence="1">3-dehydroquinate dehydratase</fullName>
        <shortName evidence="1">3-dehydroquinase</shortName>
        <ecNumber evidence="1">4.2.1.10</ecNumber>
    </recommendedName>
    <alternativeName>
        <fullName evidence="1">Type II DHQase</fullName>
    </alternativeName>
</protein>
<dbReference type="EC" id="4.2.1.10" evidence="1"/>
<dbReference type="EMBL" id="CP001407">
    <property type="protein sequence ID" value="ACO29365.1"/>
    <property type="molecule type" value="Genomic_DNA"/>
</dbReference>
<dbReference type="RefSeq" id="WP_000757082.1">
    <property type="nucleotide sequence ID" value="NZ_CP009318.1"/>
</dbReference>
<dbReference type="SMR" id="C1ERS1"/>
<dbReference type="GeneID" id="45024083"/>
<dbReference type="KEGG" id="bcx:BCA_4307"/>
<dbReference type="PATRIC" id="fig|572264.18.peg.4260"/>
<dbReference type="UniPathway" id="UPA00053">
    <property type="reaction ID" value="UER00086"/>
</dbReference>
<dbReference type="Proteomes" id="UP000002210">
    <property type="component" value="Chromosome"/>
</dbReference>
<dbReference type="GO" id="GO:0003855">
    <property type="term" value="F:3-dehydroquinate dehydratase activity"/>
    <property type="evidence" value="ECO:0007669"/>
    <property type="project" value="UniProtKB-UniRule"/>
</dbReference>
<dbReference type="GO" id="GO:0008652">
    <property type="term" value="P:amino acid biosynthetic process"/>
    <property type="evidence" value="ECO:0007669"/>
    <property type="project" value="UniProtKB-KW"/>
</dbReference>
<dbReference type="GO" id="GO:0009073">
    <property type="term" value="P:aromatic amino acid family biosynthetic process"/>
    <property type="evidence" value="ECO:0007669"/>
    <property type="project" value="UniProtKB-KW"/>
</dbReference>
<dbReference type="GO" id="GO:0009423">
    <property type="term" value="P:chorismate biosynthetic process"/>
    <property type="evidence" value="ECO:0007669"/>
    <property type="project" value="UniProtKB-UniRule"/>
</dbReference>
<dbReference type="GO" id="GO:0019631">
    <property type="term" value="P:quinate catabolic process"/>
    <property type="evidence" value="ECO:0007669"/>
    <property type="project" value="TreeGrafter"/>
</dbReference>
<dbReference type="CDD" id="cd00466">
    <property type="entry name" value="DHQase_II"/>
    <property type="match status" value="1"/>
</dbReference>
<dbReference type="Gene3D" id="3.40.50.9100">
    <property type="entry name" value="Dehydroquinase, class II"/>
    <property type="match status" value="1"/>
</dbReference>
<dbReference type="HAMAP" id="MF_00169">
    <property type="entry name" value="AroQ"/>
    <property type="match status" value="1"/>
</dbReference>
<dbReference type="InterPro" id="IPR001874">
    <property type="entry name" value="DHquinase_II"/>
</dbReference>
<dbReference type="InterPro" id="IPR018509">
    <property type="entry name" value="DHquinase_II_CS"/>
</dbReference>
<dbReference type="InterPro" id="IPR036441">
    <property type="entry name" value="DHquinase_II_sf"/>
</dbReference>
<dbReference type="NCBIfam" id="TIGR01088">
    <property type="entry name" value="aroQ"/>
    <property type="match status" value="1"/>
</dbReference>
<dbReference type="NCBIfam" id="NF003805">
    <property type="entry name" value="PRK05395.1-2"/>
    <property type="match status" value="1"/>
</dbReference>
<dbReference type="NCBIfam" id="NF003806">
    <property type="entry name" value="PRK05395.1-3"/>
    <property type="match status" value="1"/>
</dbReference>
<dbReference type="NCBIfam" id="NF003807">
    <property type="entry name" value="PRK05395.1-4"/>
    <property type="match status" value="1"/>
</dbReference>
<dbReference type="PANTHER" id="PTHR21272">
    <property type="entry name" value="CATABOLIC 3-DEHYDROQUINASE"/>
    <property type="match status" value="1"/>
</dbReference>
<dbReference type="PANTHER" id="PTHR21272:SF3">
    <property type="entry name" value="CATABOLIC 3-DEHYDROQUINASE"/>
    <property type="match status" value="1"/>
</dbReference>
<dbReference type="Pfam" id="PF01220">
    <property type="entry name" value="DHquinase_II"/>
    <property type="match status" value="1"/>
</dbReference>
<dbReference type="PIRSF" id="PIRSF001399">
    <property type="entry name" value="DHquinase_II"/>
    <property type="match status" value="1"/>
</dbReference>
<dbReference type="SUPFAM" id="SSF52304">
    <property type="entry name" value="Type II 3-dehydroquinate dehydratase"/>
    <property type="match status" value="1"/>
</dbReference>
<dbReference type="PROSITE" id="PS01029">
    <property type="entry name" value="DEHYDROQUINASE_II"/>
    <property type="match status" value="1"/>
</dbReference>
<accession>C1ERS1</accession>
<keyword id="KW-0028">Amino-acid biosynthesis</keyword>
<keyword id="KW-0057">Aromatic amino acid biosynthesis</keyword>
<keyword id="KW-0456">Lyase</keyword>
<sequence length="146" mass="16165">MKKVLLVNGPNLNRLGVREVNVYGKGTLATLEADMKQEAEAMGVELECFQSNHEGAIIDRIHEAEDIYEGIILNPGAFTHYSYAIRDAIASISIPVIEVHISNIHQRESFRHESVTAAVCAGQIVGFGFYGYKLALFALMEKLREA</sequence>
<gene>
    <name evidence="1" type="primary">aroQ</name>
    <name type="ordered locus">BCA_4307</name>
</gene>